<name>COAD_GEOSM</name>
<evidence type="ECO:0000255" key="1">
    <source>
        <dbReference type="HAMAP-Rule" id="MF_00151"/>
    </source>
</evidence>
<sequence>MPLKMAVYPGSFDPVTYGHLDIIDRGLKIFDGVIVAVARNSEKNALFSVQERIELLTEILKDRPEARVETFDGLLVDYVRRVGASVIIRGLRAVSDFEFEFQLAQMNRNITRDVETLFMMTSVPYSYLSSSIVKEVSCLNGPVDKLVPPLVKSALDAKFRG</sequence>
<reference key="1">
    <citation type="submission" date="2009-07" db="EMBL/GenBank/DDBJ databases">
        <title>Complete sequence of Geobacter sp. M21.</title>
        <authorList>
            <consortium name="US DOE Joint Genome Institute"/>
            <person name="Lucas S."/>
            <person name="Copeland A."/>
            <person name="Lapidus A."/>
            <person name="Glavina del Rio T."/>
            <person name="Dalin E."/>
            <person name="Tice H."/>
            <person name="Bruce D."/>
            <person name="Goodwin L."/>
            <person name="Pitluck S."/>
            <person name="Saunders E."/>
            <person name="Brettin T."/>
            <person name="Detter J.C."/>
            <person name="Han C."/>
            <person name="Larimer F."/>
            <person name="Land M."/>
            <person name="Hauser L."/>
            <person name="Kyrpides N."/>
            <person name="Ovchinnikova G."/>
            <person name="Lovley D."/>
        </authorList>
    </citation>
    <scope>NUCLEOTIDE SEQUENCE [LARGE SCALE GENOMIC DNA]</scope>
    <source>
        <strain>M21</strain>
    </source>
</reference>
<comment type="function">
    <text evidence="1">Reversibly transfers an adenylyl group from ATP to 4'-phosphopantetheine, yielding dephospho-CoA (dPCoA) and pyrophosphate.</text>
</comment>
<comment type="catalytic activity">
    <reaction evidence="1">
        <text>(R)-4'-phosphopantetheine + ATP + H(+) = 3'-dephospho-CoA + diphosphate</text>
        <dbReference type="Rhea" id="RHEA:19801"/>
        <dbReference type="ChEBI" id="CHEBI:15378"/>
        <dbReference type="ChEBI" id="CHEBI:30616"/>
        <dbReference type="ChEBI" id="CHEBI:33019"/>
        <dbReference type="ChEBI" id="CHEBI:57328"/>
        <dbReference type="ChEBI" id="CHEBI:61723"/>
        <dbReference type="EC" id="2.7.7.3"/>
    </reaction>
</comment>
<comment type="cofactor">
    <cofactor evidence="1">
        <name>Mg(2+)</name>
        <dbReference type="ChEBI" id="CHEBI:18420"/>
    </cofactor>
</comment>
<comment type="pathway">
    <text evidence="1">Cofactor biosynthesis; coenzyme A biosynthesis; CoA from (R)-pantothenate: step 4/5.</text>
</comment>
<comment type="subunit">
    <text evidence="1">Homohexamer.</text>
</comment>
<comment type="subcellular location">
    <subcellularLocation>
        <location evidence="1">Cytoplasm</location>
    </subcellularLocation>
</comment>
<comment type="similarity">
    <text evidence="1">Belongs to the bacterial CoaD family.</text>
</comment>
<proteinExistence type="inferred from homology"/>
<feature type="chain" id="PRO_1000203423" description="Phosphopantetheine adenylyltransferase">
    <location>
        <begin position="1"/>
        <end position="161"/>
    </location>
</feature>
<feature type="binding site" evidence="1">
    <location>
        <begin position="11"/>
        <end position="12"/>
    </location>
    <ligand>
        <name>ATP</name>
        <dbReference type="ChEBI" id="CHEBI:30616"/>
    </ligand>
</feature>
<feature type="binding site" evidence="1">
    <location>
        <position position="11"/>
    </location>
    <ligand>
        <name>substrate</name>
    </ligand>
</feature>
<feature type="binding site" evidence="1">
    <location>
        <position position="19"/>
    </location>
    <ligand>
        <name>ATP</name>
        <dbReference type="ChEBI" id="CHEBI:30616"/>
    </ligand>
</feature>
<feature type="binding site" evidence="1">
    <location>
        <position position="43"/>
    </location>
    <ligand>
        <name>substrate</name>
    </ligand>
</feature>
<feature type="binding site" evidence="1">
    <location>
        <position position="75"/>
    </location>
    <ligand>
        <name>substrate</name>
    </ligand>
</feature>
<feature type="binding site" evidence="1">
    <location>
        <position position="89"/>
    </location>
    <ligand>
        <name>substrate</name>
    </ligand>
</feature>
<feature type="binding site" evidence="1">
    <location>
        <begin position="90"/>
        <end position="92"/>
    </location>
    <ligand>
        <name>ATP</name>
        <dbReference type="ChEBI" id="CHEBI:30616"/>
    </ligand>
</feature>
<feature type="binding site" evidence="1">
    <location>
        <position position="100"/>
    </location>
    <ligand>
        <name>ATP</name>
        <dbReference type="ChEBI" id="CHEBI:30616"/>
    </ligand>
</feature>
<feature type="binding site" evidence="1">
    <location>
        <begin position="125"/>
        <end position="131"/>
    </location>
    <ligand>
        <name>ATP</name>
        <dbReference type="ChEBI" id="CHEBI:30616"/>
    </ligand>
</feature>
<feature type="site" description="Transition state stabilizer" evidence="1">
    <location>
        <position position="19"/>
    </location>
</feature>
<protein>
    <recommendedName>
        <fullName evidence="1">Phosphopantetheine adenylyltransferase</fullName>
        <ecNumber evidence="1">2.7.7.3</ecNumber>
    </recommendedName>
    <alternativeName>
        <fullName evidence="1">Dephospho-CoA pyrophosphorylase</fullName>
    </alternativeName>
    <alternativeName>
        <fullName evidence="1">Pantetheine-phosphate adenylyltransferase</fullName>
        <shortName evidence="1">PPAT</shortName>
    </alternativeName>
</protein>
<accession>C6DZ58</accession>
<keyword id="KW-0067">ATP-binding</keyword>
<keyword id="KW-0173">Coenzyme A biosynthesis</keyword>
<keyword id="KW-0963">Cytoplasm</keyword>
<keyword id="KW-0460">Magnesium</keyword>
<keyword id="KW-0547">Nucleotide-binding</keyword>
<keyword id="KW-0548">Nucleotidyltransferase</keyword>
<keyword id="KW-0808">Transferase</keyword>
<organism>
    <name type="scientific">Geobacter sp. (strain M21)</name>
    <dbReference type="NCBI Taxonomy" id="443144"/>
    <lineage>
        <taxon>Bacteria</taxon>
        <taxon>Pseudomonadati</taxon>
        <taxon>Thermodesulfobacteriota</taxon>
        <taxon>Desulfuromonadia</taxon>
        <taxon>Geobacterales</taxon>
        <taxon>Geobacteraceae</taxon>
        <taxon>Geobacter</taxon>
    </lineage>
</organism>
<dbReference type="EC" id="2.7.7.3" evidence="1"/>
<dbReference type="EMBL" id="CP001661">
    <property type="protein sequence ID" value="ACT18366.1"/>
    <property type="molecule type" value="Genomic_DNA"/>
</dbReference>
<dbReference type="SMR" id="C6DZ58"/>
<dbReference type="STRING" id="443144.GM21_2318"/>
<dbReference type="KEGG" id="gem:GM21_2318"/>
<dbReference type="eggNOG" id="COG0669">
    <property type="taxonomic scope" value="Bacteria"/>
</dbReference>
<dbReference type="HOGENOM" id="CLU_100149_0_1_7"/>
<dbReference type="OrthoDB" id="9806661at2"/>
<dbReference type="UniPathway" id="UPA00241">
    <property type="reaction ID" value="UER00355"/>
</dbReference>
<dbReference type="GO" id="GO:0005737">
    <property type="term" value="C:cytoplasm"/>
    <property type="evidence" value="ECO:0007669"/>
    <property type="project" value="UniProtKB-SubCell"/>
</dbReference>
<dbReference type="GO" id="GO:0005524">
    <property type="term" value="F:ATP binding"/>
    <property type="evidence" value="ECO:0007669"/>
    <property type="project" value="UniProtKB-KW"/>
</dbReference>
<dbReference type="GO" id="GO:0004595">
    <property type="term" value="F:pantetheine-phosphate adenylyltransferase activity"/>
    <property type="evidence" value="ECO:0007669"/>
    <property type="project" value="UniProtKB-UniRule"/>
</dbReference>
<dbReference type="GO" id="GO:0015937">
    <property type="term" value="P:coenzyme A biosynthetic process"/>
    <property type="evidence" value="ECO:0007669"/>
    <property type="project" value="UniProtKB-UniRule"/>
</dbReference>
<dbReference type="CDD" id="cd02163">
    <property type="entry name" value="PPAT"/>
    <property type="match status" value="1"/>
</dbReference>
<dbReference type="Gene3D" id="3.40.50.620">
    <property type="entry name" value="HUPs"/>
    <property type="match status" value="1"/>
</dbReference>
<dbReference type="HAMAP" id="MF_00151">
    <property type="entry name" value="PPAT_bact"/>
    <property type="match status" value="1"/>
</dbReference>
<dbReference type="InterPro" id="IPR004821">
    <property type="entry name" value="Cyt_trans-like"/>
</dbReference>
<dbReference type="InterPro" id="IPR001980">
    <property type="entry name" value="PPAT"/>
</dbReference>
<dbReference type="InterPro" id="IPR014729">
    <property type="entry name" value="Rossmann-like_a/b/a_fold"/>
</dbReference>
<dbReference type="NCBIfam" id="TIGR01510">
    <property type="entry name" value="coaD_prev_kdtB"/>
    <property type="match status" value="1"/>
</dbReference>
<dbReference type="NCBIfam" id="TIGR00125">
    <property type="entry name" value="cyt_tran_rel"/>
    <property type="match status" value="1"/>
</dbReference>
<dbReference type="PANTHER" id="PTHR21342">
    <property type="entry name" value="PHOSPHOPANTETHEINE ADENYLYLTRANSFERASE"/>
    <property type="match status" value="1"/>
</dbReference>
<dbReference type="PANTHER" id="PTHR21342:SF1">
    <property type="entry name" value="PHOSPHOPANTETHEINE ADENYLYLTRANSFERASE"/>
    <property type="match status" value="1"/>
</dbReference>
<dbReference type="Pfam" id="PF01467">
    <property type="entry name" value="CTP_transf_like"/>
    <property type="match status" value="1"/>
</dbReference>
<dbReference type="PRINTS" id="PR01020">
    <property type="entry name" value="LPSBIOSNTHSS"/>
</dbReference>
<dbReference type="SUPFAM" id="SSF52374">
    <property type="entry name" value="Nucleotidylyl transferase"/>
    <property type="match status" value="1"/>
</dbReference>
<gene>
    <name evidence="1" type="primary">coaD</name>
    <name type="ordered locus">GM21_2318</name>
</gene>